<name>RM49_HUMAN</name>
<accession>Q13405</accession>
<accession>B2R4G6</accession>
<protein>
    <recommendedName>
        <fullName evidence="8">Large ribosomal subunit protein mL49</fullName>
    </recommendedName>
    <alternativeName>
        <fullName>39S ribosomal protein L49, mitochondrial</fullName>
        <shortName>L49mt</shortName>
        <shortName>MRP-L49</shortName>
    </alternativeName>
    <alternativeName>
        <fullName>Neighbor of FAU</fullName>
        <shortName>NOF</shortName>
    </alternativeName>
    <alternativeName>
        <fullName>Protein NOF1</fullName>
    </alternativeName>
</protein>
<sequence length="166" mass="19198">MAATMFRATLRGWRTGVQRGCGLRLLSQTQGPPDYPRFVESVDEYQFVERLLPATRIPDPPKHEHYPTPSGWQPPRDPPPNLPYFVRRSRMHNIPVYKDITHGNRQMTVIRKVEGDIWALQKDVEDFLSPLLGKTPVTQVNEVTGTLRIKGYFDQELKAWLLEKGF</sequence>
<comment type="subunit">
    <text evidence="1 3 4 5 6 7">Component of the mitochondrial large ribosomal subunit (mt-LSU) (PubMed:25278503, PubMed:25838379, PubMed:28892042, PubMed:35177605). Mature mammalian 55S mitochondrial ribosomes consist of a small (28S) and a large (39S) subunit. The 28S small subunit contains a 12S ribosomal RNA (12S mt-rRNA) and 30 different proteins. The 39S large subunit contains a 16S rRNA (16S mt-rRNA), a copy of mitochondrial valine transfer RNA (mt-tRNA(Val)), which plays an integral structural role, and 52 different proteins (PubMed:11551941, PubMed:25278503, PubMed:25838379). Interacts with OXA1L (By similarity).</text>
</comment>
<comment type="interaction">
    <interactant intactId="EBI-5325200">
        <id>Q13405</id>
    </interactant>
    <interactant intactId="EBI-11954292">
        <id>Q86V38</id>
        <label>ATN1</label>
    </interactant>
    <organismsDiffer>false</organismsDiffer>
    <experiments>3</experiments>
</comment>
<comment type="interaction">
    <interactant intactId="EBI-5325200">
        <id>Q13405</id>
    </interactant>
    <interactant intactId="EBI-12275524">
        <id>P23560-2</id>
        <label>BDNF</label>
    </interactant>
    <organismsDiffer>false</organismsDiffer>
    <experiments>3</experiments>
</comment>
<comment type="interaction">
    <interactant intactId="EBI-5325200">
        <id>Q13405</id>
    </interactant>
    <interactant intactId="EBI-1055254">
        <id>Q8WXH2</id>
        <label>JPH3</label>
    </interactant>
    <organismsDiffer>false</organismsDiffer>
    <experiments>3</experiments>
</comment>
<comment type="interaction">
    <interactant intactId="EBI-5325200">
        <id>Q13405</id>
    </interactant>
    <interactant intactId="EBI-716404">
        <id>P16284</id>
        <label>PECAM1</label>
    </interactant>
    <organismsDiffer>false</organismsDiffer>
    <experiments>3</experiments>
</comment>
<comment type="interaction">
    <interactant intactId="EBI-5325200">
        <id>Q13405</id>
    </interactant>
    <interactant intactId="EBI-916524">
        <id>P84098</id>
        <label>RPL19</label>
    </interactant>
    <organismsDiffer>false</organismsDiffer>
    <experiments>2</experiments>
</comment>
<comment type="subcellular location">
    <subcellularLocation>
        <location evidence="4 5 6">Mitochondrion</location>
    </subcellularLocation>
</comment>
<comment type="tissue specificity">
    <text>Ubiquitous.</text>
</comment>
<comment type="similarity">
    <text evidence="9">Belongs to the mitochondrion-specific ribosomal protein mL49 family.</text>
</comment>
<evidence type="ECO:0000250" key="1">
    <source>
        <dbReference type="UniProtKB" id="Q5EA71"/>
    </source>
</evidence>
<evidence type="ECO:0000256" key="2">
    <source>
        <dbReference type="SAM" id="MobiDB-lite"/>
    </source>
</evidence>
<evidence type="ECO:0000269" key="3">
    <source>
    </source>
</evidence>
<evidence type="ECO:0000269" key="4">
    <source>
    </source>
</evidence>
<evidence type="ECO:0000269" key="5">
    <source>
    </source>
</evidence>
<evidence type="ECO:0000269" key="6">
    <source>
    </source>
</evidence>
<evidence type="ECO:0000269" key="7">
    <source>
    </source>
</evidence>
<evidence type="ECO:0000303" key="8">
    <source>
    </source>
</evidence>
<evidence type="ECO:0000305" key="9"/>
<evidence type="ECO:0007744" key="10">
    <source>
        <dbReference type="PDB" id="3J7Y"/>
    </source>
</evidence>
<evidence type="ECO:0007744" key="11">
    <source>
        <dbReference type="PDB" id="3J9M"/>
    </source>
</evidence>
<evidence type="ECO:0007744" key="12">
    <source>
        <dbReference type="PDB" id="5OOL"/>
    </source>
</evidence>
<evidence type="ECO:0007744" key="13">
    <source>
        <dbReference type="PDB" id="5OOM"/>
    </source>
</evidence>
<evidence type="ECO:0007744" key="14">
    <source>
        <dbReference type="PDB" id="7QH6"/>
    </source>
</evidence>
<evidence type="ECO:0007744" key="15">
    <source>
        <dbReference type="PDB" id="7QH7"/>
    </source>
</evidence>
<evidence type="ECO:0007829" key="16">
    <source>
        <dbReference type="PDB" id="3J7Y"/>
    </source>
</evidence>
<evidence type="ECO:0007829" key="17">
    <source>
        <dbReference type="PDB" id="7OF0"/>
    </source>
</evidence>
<proteinExistence type="evidence at protein level"/>
<keyword id="KW-0002">3D-structure</keyword>
<keyword id="KW-0496">Mitochondrion</keyword>
<keyword id="KW-1267">Proteomics identification</keyword>
<keyword id="KW-1185">Reference proteome</keyword>
<keyword id="KW-0687">Ribonucleoprotein</keyword>
<keyword id="KW-0689">Ribosomal protein</keyword>
<dbReference type="EMBL" id="U39400">
    <property type="protein sequence ID" value="AAB18826.1"/>
    <property type="molecule type" value="mRNA"/>
</dbReference>
<dbReference type="EMBL" id="AB062395">
    <property type="protein sequence ID" value="BAB93482.1"/>
    <property type="molecule type" value="mRNA"/>
</dbReference>
<dbReference type="EMBL" id="AK311821">
    <property type="protein sequence ID" value="BAG34763.1"/>
    <property type="molecule type" value="mRNA"/>
</dbReference>
<dbReference type="EMBL" id="CH471076">
    <property type="protein sequence ID" value="EAW74355.1"/>
    <property type="molecule type" value="Genomic_DNA"/>
</dbReference>
<dbReference type="EMBL" id="BC004378">
    <property type="protein sequence ID" value="AAH04378.1"/>
    <property type="molecule type" value="mRNA"/>
</dbReference>
<dbReference type="CCDS" id="CCDS8096.1"/>
<dbReference type="PIR" id="G02237">
    <property type="entry name" value="G02237"/>
</dbReference>
<dbReference type="RefSeq" id="NP_004918.1">
    <property type="nucleotide sequence ID" value="NM_004927.4"/>
</dbReference>
<dbReference type="PDB" id="3J7Y">
    <property type="method" value="EM"/>
    <property type="resolution" value="3.40 A"/>
    <property type="chains" value="g=1-166"/>
</dbReference>
<dbReference type="PDB" id="3J9M">
    <property type="method" value="EM"/>
    <property type="resolution" value="3.50 A"/>
    <property type="chains" value="g=1-166"/>
</dbReference>
<dbReference type="PDB" id="5OOL">
    <property type="method" value="EM"/>
    <property type="resolution" value="3.06 A"/>
    <property type="chains" value="g=1-166"/>
</dbReference>
<dbReference type="PDB" id="5OOM">
    <property type="method" value="EM"/>
    <property type="resolution" value="3.03 A"/>
    <property type="chains" value="g=1-166"/>
</dbReference>
<dbReference type="PDB" id="6I9R">
    <property type="method" value="EM"/>
    <property type="resolution" value="3.90 A"/>
    <property type="chains" value="g=1-166"/>
</dbReference>
<dbReference type="PDB" id="6NU2">
    <property type="method" value="EM"/>
    <property type="resolution" value="3.90 A"/>
    <property type="chains" value="g=38-166"/>
</dbReference>
<dbReference type="PDB" id="6NU3">
    <property type="method" value="EM"/>
    <property type="resolution" value="4.40 A"/>
    <property type="chains" value="g=1-166"/>
</dbReference>
<dbReference type="PDB" id="6VLZ">
    <property type="method" value="EM"/>
    <property type="resolution" value="2.97 A"/>
    <property type="chains" value="g=1-166"/>
</dbReference>
<dbReference type="PDB" id="6VMI">
    <property type="method" value="EM"/>
    <property type="resolution" value="2.96 A"/>
    <property type="chains" value="g=1-166"/>
</dbReference>
<dbReference type="PDB" id="6ZM5">
    <property type="method" value="EM"/>
    <property type="resolution" value="2.89 A"/>
    <property type="chains" value="g=1-166"/>
</dbReference>
<dbReference type="PDB" id="6ZM6">
    <property type="method" value="EM"/>
    <property type="resolution" value="2.59 A"/>
    <property type="chains" value="g=1-166"/>
</dbReference>
<dbReference type="PDB" id="6ZS9">
    <property type="method" value="EM"/>
    <property type="resolution" value="4.00 A"/>
    <property type="chains" value="g=1-166"/>
</dbReference>
<dbReference type="PDB" id="6ZSA">
    <property type="method" value="EM"/>
    <property type="resolution" value="4.00 A"/>
    <property type="chains" value="g=1-166"/>
</dbReference>
<dbReference type="PDB" id="6ZSB">
    <property type="method" value="EM"/>
    <property type="resolution" value="4.50 A"/>
    <property type="chains" value="g=1-166"/>
</dbReference>
<dbReference type="PDB" id="6ZSC">
    <property type="method" value="EM"/>
    <property type="resolution" value="3.50 A"/>
    <property type="chains" value="g=1-166"/>
</dbReference>
<dbReference type="PDB" id="6ZSD">
    <property type="method" value="EM"/>
    <property type="resolution" value="3.70 A"/>
    <property type="chains" value="g=1-166"/>
</dbReference>
<dbReference type="PDB" id="6ZSE">
    <property type="method" value="EM"/>
    <property type="resolution" value="5.00 A"/>
    <property type="chains" value="g=1-166"/>
</dbReference>
<dbReference type="PDB" id="6ZSG">
    <property type="method" value="EM"/>
    <property type="resolution" value="4.00 A"/>
    <property type="chains" value="g=1-166"/>
</dbReference>
<dbReference type="PDB" id="7A5F">
    <property type="method" value="EM"/>
    <property type="resolution" value="4.40 A"/>
    <property type="chains" value="g3=1-166"/>
</dbReference>
<dbReference type="PDB" id="7A5G">
    <property type="method" value="EM"/>
    <property type="resolution" value="4.33 A"/>
    <property type="chains" value="g3=1-166"/>
</dbReference>
<dbReference type="PDB" id="7A5H">
    <property type="method" value="EM"/>
    <property type="resolution" value="3.30 A"/>
    <property type="chains" value="g=1-166"/>
</dbReference>
<dbReference type="PDB" id="7A5I">
    <property type="method" value="EM"/>
    <property type="resolution" value="3.70 A"/>
    <property type="chains" value="g3=1-166"/>
</dbReference>
<dbReference type="PDB" id="7A5J">
    <property type="method" value="EM"/>
    <property type="resolution" value="3.10 A"/>
    <property type="chains" value="g=1-166"/>
</dbReference>
<dbReference type="PDB" id="7A5K">
    <property type="method" value="EM"/>
    <property type="resolution" value="3.70 A"/>
    <property type="chains" value="g3=1-166"/>
</dbReference>
<dbReference type="PDB" id="7L08">
    <property type="method" value="EM"/>
    <property type="resolution" value="3.49 A"/>
    <property type="chains" value="g=1-166"/>
</dbReference>
<dbReference type="PDB" id="7L20">
    <property type="method" value="EM"/>
    <property type="resolution" value="3.15 A"/>
    <property type="chains" value="g=1-166"/>
</dbReference>
<dbReference type="PDB" id="7O9K">
    <property type="method" value="EM"/>
    <property type="resolution" value="3.10 A"/>
    <property type="chains" value="g=1-166"/>
</dbReference>
<dbReference type="PDB" id="7O9M">
    <property type="method" value="EM"/>
    <property type="resolution" value="2.50 A"/>
    <property type="chains" value="g=1-166"/>
</dbReference>
<dbReference type="PDB" id="7ODR">
    <property type="method" value="EM"/>
    <property type="resolution" value="2.90 A"/>
    <property type="chains" value="g=1-166"/>
</dbReference>
<dbReference type="PDB" id="7ODS">
    <property type="method" value="EM"/>
    <property type="resolution" value="3.10 A"/>
    <property type="chains" value="g=1-166"/>
</dbReference>
<dbReference type="PDB" id="7ODT">
    <property type="method" value="EM"/>
    <property type="resolution" value="3.10 A"/>
    <property type="chains" value="g=1-166"/>
</dbReference>
<dbReference type="PDB" id="7OF0">
    <property type="method" value="EM"/>
    <property type="resolution" value="2.20 A"/>
    <property type="chains" value="g=1-166"/>
</dbReference>
<dbReference type="PDB" id="7OF2">
    <property type="method" value="EM"/>
    <property type="resolution" value="2.70 A"/>
    <property type="chains" value="g=1-166"/>
</dbReference>
<dbReference type="PDB" id="7OF3">
    <property type="method" value="EM"/>
    <property type="resolution" value="2.70 A"/>
    <property type="chains" value="g=1-166"/>
</dbReference>
<dbReference type="PDB" id="7OF4">
    <property type="method" value="EM"/>
    <property type="resolution" value="2.70 A"/>
    <property type="chains" value="g=1-166"/>
</dbReference>
<dbReference type="PDB" id="7OF5">
    <property type="method" value="EM"/>
    <property type="resolution" value="2.90 A"/>
    <property type="chains" value="g=1-166"/>
</dbReference>
<dbReference type="PDB" id="7OF6">
    <property type="method" value="EM"/>
    <property type="resolution" value="2.60 A"/>
    <property type="chains" value="g=1-166"/>
</dbReference>
<dbReference type="PDB" id="7OF7">
    <property type="method" value="EM"/>
    <property type="resolution" value="2.50 A"/>
    <property type="chains" value="g=1-166"/>
</dbReference>
<dbReference type="PDB" id="7OG4">
    <property type="method" value="EM"/>
    <property type="resolution" value="3.80 A"/>
    <property type="chains" value="g=1-166"/>
</dbReference>
<dbReference type="PDB" id="7OI6">
    <property type="method" value="EM"/>
    <property type="resolution" value="5.70 A"/>
    <property type="chains" value="g=1-166"/>
</dbReference>
<dbReference type="PDB" id="7OI7">
    <property type="method" value="EM"/>
    <property type="resolution" value="3.50 A"/>
    <property type="chains" value="g=1-166"/>
</dbReference>
<dbReference type="PDB" id="7OI8">
    <property type="method" value="EM"/>
    <property type="resolution" value="3.50 A"/>
    <property type="chains" value="g=1-166"/>
</dbReference>
<dbReference type="PDB" id="7OI9">
    <property type="method" value="EM"/>
    <property type="resolution" value="3.30 A"/>
    <property type="chains" value="g=1-166"/>
</dbReference>
<dbReference type="PDB" id="7OIA">
    <property type="method" value="EM"/>
    <property type="resolution" value="3.20 A"/>
    <property type="chains" value="g=1-166"/>
</dbReference>
<dbReference type="PDB" id="7OIB">
    <property type="method" value="EM"/>
    <property type="resolution" value="3.30 A"/>
    <property type="chains" value="g=1-166"/>
</dbReference>
<dbReference type="PDB" id="7OIC">
    <property type="method" value="EM"/>
    <property type="resolution" value="3.10 A"/>
    <property type="chains" value="g=1-166"/>
</dbReference>
<dbReference type="PDB" id="7OID">
    <property type="method" value="EM"/>
    <property type="resolution" value="3.70 A"/>
    <property type="chains" value="g=1-166"/>
</dbReference>
<dbReference type="PDB" id="7OIE">
    <property type="method" value="EM"/>
    <property type="resolution" value="3.50 A"/>
    <property type="chains" value="g=1-166"/>
</dbReference>
<dbReference type="PDB" id="7PD3">
    <property type="method" value="EM"/>
    <property type="resolution" value="3.40 A"/>
    <property type="chains" value="g=1-166"/>
</dbReference>
<dbReference type="PDB" id="7PO4">
    <property type="method" value="EM"/>
    <property type="resolution" value="2.56 A"/>
    <property type="chains" value="g=1-166"/>
</dbReference>
<dbReference type="PDB" id="7QH6">
    <property type="method" value="EM"/>
    <property type="resolution" value="3.08 A"/>
    <property type="chains" value="g=1-166"/>
</dbReference>
<dbReference type="PDB" id="7QH7">
    <property type="method" value="EM"/>
    <property type="resolution" value="2.89 A"/>
    <property type="chains" value="g=38-166"/>
</dbReference>
<dbReference type="PDB" id="7QI4">
    <property type="method" value="EM"/>
    <property type="resolution" value="2.21 A"/>
    <property type="chains" value="g=1-166"/>
</dbReference>
<dbReference type="PDB" id="7QI5">
    <property type="method" value="EM"/>
    <property type="resolution" value="2.63 A"/>
    <property type="chains" value="g=1-166"/>
</dbReference>
<dbReference type="PDB" id="7QI6">
    <property type="method" value="EM"/>
    <property type="resolution" value="2.98 A"/>
    <property type="chains" value="g=1-166"/>
</dbReference>
<dbReference type="PDB" id="8ANY">
    <property type="method" value="EM"/>
    <property type="resolution" value="2.85 A"/>
    <property type="chains" value="g=1-166"/>
</dbReference>
<dbReference type="PDB" id="8K2A">
    <property type="method" value="EM"/>
    <property type="resolution" value="2.90 A"/>
    <property type="chains" value="Lw=1-166"/>
</dbReference>
<dbReference type="PDB" id="8K2B">
    <property type="method" value="EM"/>
    <property type="resolution" value="3.40 A"/>
    <property type="chains" value="Lw=1-166"/>
</dbReference>
<dbReference type="PDB" id="8OIR">
    <property type="method" value="EM"/>
    <property type="resolution" value="3.10 A"/>
    <property type="chains" value="Bx=1-166"/>
</dbReference>
<dbReference type="PDB" id="8OIT">
    <property type="method" value="EM"/>
    <property type="resolution" value="2.90 A"/>
    <property type="chains" value="Bx=1-166"/>
</dbReference>
<dbReference type="PDB" id="8PK0">
    <property type="method" value="EM"/>
    <property type="resolution" value="3.03 A"/>
    <property type="chains" value="g=1-166"/>
</dbReference>
<dbReference type="PDB" id="8QSJ">
    <property type="method" value="EM"/>
    <property type="resolution" value="3.00 A"/>
    <property type="chains" value="g=1-166"/>
</dbReference>
<dbReference type="PDB" id="8QU5">
    <property type="method" value="EM"/>
    <property type="resolution" value="2.42 A"/>
    <property type="chains" value="g=1-166"/>
</dbReference>
<dbReference type="PDB" id="8RRI">
    <property type="method" value="EM"/>
    <property type="resolution" value="2.40 A"/>
    <property type="chains" value="g=1-166"/>
</dbReference>
<dbReference type="PDB" id="8XT0">
    <property type="method" value="EM"/>
    <property type="resolution" value="3.20 A"/>
    <property type="chains" value="Lw=1-166"/>
</dbReference>
<dbReference type="PDB" id="8XT1">
    <property type="method" value="EM"/>
    <property type="resolution" value="3.10 A"/>
    <property type="chains" value="Lw=1-166"/>
</dbReference>
<dbReference type="PDB" id="8XT2">
    <property type="method" value="EM"/>
    <property type="resolution" value="3.30 A"/>
    <property type="chains" value="Lw=1-166"/>
</dbReference>
<dbReference type="PDB" id="8XT3">
    <property type="method" value="EM"/>
    <property type="resolution" value="3.10 A"/>
    <property type="chains" value="Lw=1-166"/>
</dbReference>
<dbReference type="PDBsum" id="3J7Y"/>
<dbReference type="PDBsum" id="3J9M"/>
<dbReference type="PDBsum" id="5OOL"/>
<dbReference type="PDBsum" id="5OOM"/>
<dbReference type="PDBsum" id="6I9R"/>
<dbReference type="PDBsum" id="6NU2"/>
<dbReference type="PDBsum" id="6NU3"/>
<dbReference type="PDBsum" id="6VLZ"/>
<dbReference type="PDBsum" id="6VMI"/>
<dbReference type="PDBsum" id="6ZM5"/>
<dbReference type="PDBsum" id="6ZM6"/>
<dbReference type="PDBsum" id="6ZS9"/>
<dbReference type="PDBsum" id="6ZSA"/>
<dbReference type="PDBsum" id="6ZSB"/>
<dbReference type="PDBsum" id="6ZSC"/>
<dbReference type="PDBsum" id="6ZSD"/>
<dbReference type="PDBsum" id="6ZSE"/>
<dbReference type="PDBsum" id="6ZSG"/>
<dbReference type="PDBsum" id="7A5F"/>
<dbReference type="PDBsum" id="7A5G"/>
<dbReference type="PDBsum" id="7A5H"/>
<dbReference type="PDBsum" id="7A5I"/>
<dbReference type="PDBsum" id="7A5J"/>
<dbReference type="PDBsum" id="7A5K"/>
<dbReference type="PDBsum" id="7L08"/>
<dbReference type="PDBsum" id="7L20"/>
<dbReference type="PDBsum" id="7O9K"/>
<dbReference type="PDBsum" id="7O9M"/>
<dbReference type="PDBsum" id="7ODR"/>
<dbReference type="PDBsum" id="7ODS"/>
<dbReference type="PDBsum" id="7ODT"/>
<dbReference type="PDBsum" id="7OF0"/>
<dbReference type="PDBsum" id="7OF2"/>
<dbReference type="PDBsum" id="7OF3"/>
<dbReference type="PDBsum" id="7OF4"/>
<dbReference type="PDBsum" id="7OF5"/>
<dbReference type="PDBsum" id="7OF6"/>
<dbReference type="PDBsum" id="7OF7"/>
<dbReference type="PDBsum" id="7OG4"/>
<dbReference type="PDBsum" id="7OI6"/>
<dbReference type="PDBsum" id="7OI7"/>
<dbReference type="PDBsum" id="7OI8"/>
<dbReference type="PDBsum" id="7OI9"/>
<dbReference type="PDBsum" id="7OIA"/>
<dbReference type="PDBsum" id="7OIB"/>
<dbReference type="PDBsum" id="7OIC"/>
<dbReference type="PDBsum" id="7OID"/>
<dbReference type="PDBsum" id="7OIE"/>
<dbReference type="PDBsum" id="7PD3"/>
<dbReference type="PDBsum" id="7PO4"/>
<dbReference type="PDBsum" id="7QH6"/>
<dbReference type="PDBsum" id="7QH7"/>
<dbReference type="PDBsum" id="7QI4"/>
<dbReference type="PDBsum" id="7QI5"/>
<dbReference type="PDBsum" id="7QI6"/>
<dbReference type="PDBsum" id="8ANY"/>
<dbReference type="PDBsum" id="8K2A"/>
<dbReference type="PDBsum" id="8K2B"/>
<dbReference type="PDBsum" id="8OIR"/>
<dbReference type="PDBsum" id="8OIT"/>
<dbReference type="PDBsum" id="8PK0"/>
<dbReference type="PDBsum" id="8QSJ"/>
<dbReference type="PDBsum" id="8QU5"/>
<dbReference type="PDBsum" id="8RRI"/>
<dbReference type="PDBsum" id="8XT0"/>
<dbReference type="PDBsum" id="8XT1"/>
<dbReference type="PDBsum" id="8XT2"/>
<dbReference type="PDBsum" id="8XT3"/>
<dbReference type="EMDB" id="EMD-0514"/>
<dbReference type="EMDB" id="EMD-0515"/>
<dbReference type="EMDB" id="EMD-11278"/>
<dbReference type="EMDB" id="EMD-11279"/>
<dbReference type="EMDB" id="EMD-11390"/>
<dbReference type="EMDB" id="EMD-11391"/>
<dbReference type="EMDB" id="EMD-11392"/>
<dbReference type="EMDB" id="EMD-11393"/>
<dbReference type="EMDB" id="EMD-11394"/>
<dbReference type="EMDB" id="EMD-11395"/>
<dbReference type="EMDB" id="EMD-11397"/>
<dbReference type="EMDB" id="EMD-11641"/>
<dbReference type="EMDB" id="EMD-11642"/>
<dbReference type="EMDB" id="EMD-11643"/>
<dbReference type="EMDB" id="EMD-11644"/>
<dbReference type="EMDB" id="EMD-11645"/>
<dbReference type="EMDB" id="EMD-11646"/>
<dbReference type="EMDB" id="EMD-12763"/>
<dbReference type="EMDB" id="EMD-12764"/>
<dbReference type="EMDB" id="EMD-12845"/>
<dbReference type="EMDB" id="EMD-12846"/>
<dbReference type="EMDB" id="EMD-12847"/>
<dbReference type="EMDB" id="EMD-12865"/>
<dbReference type="EMDB" id="EMD-12867"/>
<dbReference type="EMDB" id="EMD-12868"/>
<dbReference type="EMDB" id="EMD-12869"/>
<dbReference type="EMDB" id="EMD-12870"/>
<dbReference type="EMDB" id="EMD-12871"/>
<dbReference type="EMDB" id="EMD-12872"/>
<dbReference type="EMDB" id="EMD-12877"/>
<dbReference type="EMDB" id="EMD-12919"/>
<dbReference type="EMDB" id="EMD-12920"/>
<dbReference type="EMDB" id="EMD-12921"/>
<dbReference type="EMDB" id="EMD-12922"/>
<dbReference type="EMDB" id="EMD-12923"/>
<dbReference type="EMDB" id="EMD-12924"/>
<dbReference type="EMDB" id="EMD-12925"/>
<dbReference type="EMDB" id="EMD-12926"/>
<dbReference type="EMDB" id="EMD-12927"/>
<dbReference type="EMDB" id="EMD-13329"/>
<dbReference type="EMDB" id="EMD-13562"/>
<dbReference type="EMDB" id="EMD-13965"/>
<dbReference type="EMDB" id="EMD-13967"/>
<dbReference type="EMDB" id="EMD-13980"/>
<dbReference type="EMDB" id="EMD-13981"/>
<dbReference type="EMDB" id="EMD-13982"/>
<dbReference type="EMDB" id="EMD-15544"/>
<dbReference type="EMDB" id="EMD-16897"/>
<dbReference type="EMDB" id="EMD-16899"/>
<dbReference type="EMDB" id="EMD-17719"/>
<dbReference type="EMDB" id="EMD-19460"/>
<dbReference type="EMDB" id="EMD-21233"/>
<dbReference type="EMDB" id="EMD-21242"/>
<dbReference type="EMDB" id="EMD-23096"/>
<dbReference type="EMDB" id="EMD-23121"/>
<dbReference type="EMDB" id="EMD-36836"/>
<dbReference type="EMDB" id="EMD-36837"/>
<dbReference type="EMDB" id="EMD-3842"/>
<dbReference type="EMDB" id="EMD-3843"/>
<dbReference type="EMDB" id="EMD-38632"/>
<dbReference type="EMDB" id="EMD-38633"/>
<dbReference type="EMDB" id="EMD-38634"/>
<dbReference type="EMDB" id="EMD-38635"/>
<dbReference type="EMDB" id="EMD-4434"/>
<dbReference type="SMR" id="Q13405"/>
<dbReference type="BioGRID" id="107199">
    <property type="interactions" value="187"/>
</dbReference>
<dbReference type="ComplexPortal" id="CPX-5226">
    <property type="entry name" value="39S mitochondrial large ribosomal subunit"/>
</dbReference>
<dbReference type="CORUM" id="Q13405"/>
<dbReference type="FunCoup" id="Q13405">
    <property type="interactions" value="2350"/>
</dbReference>
<dbReference type="IntAct" id="Q13405">
    <property type="interactions" value="85"/>
</dbReference>
<dbReference type="MINT" id="Q13405"/>
<dbReference type="STRING" id="9606.ENSP00000279242"/>
<dbReference type="GlyGen" id="Q13405">
    <property type="glycosylation" value="1 site, 1 O-linked glycan (1 site)"/>
</dbReference>
<dbReference type="iPTMnet" id="Q13405"/>
<dbReference type="PhosphoSitePlus" id="Q13405"/>
<dbReference type="SwissPalm" id="Q13405"/>
<dbReference type="BioMuta" id="MRPL49"/>
<dbReference type="jPOST" id="Q13405"/>
<dbReference type="MassIVE" id="Q13405"/>
<dbReference type="PaxDb" id="9606-ENSP00000279242"/>
<dbReference type="PeptideAtlas" id="Q13405"/>
<dbReference type="ProteomicsDB" id="59387"/>
<dbReference type="Pumba" id="Q13405"/>
<dbReference type="TopDownProteomics" id="Q13405"/>
<dbReference type="Antibodypedia" id="29687">
    <property type="antibodies" value="118 antibodies from 23 providers"/>
</dbReference>
<dbReference type="DNASU" id="740"/>
<dbReference type="Ensembl" id="ENST00000279242.7">
    <property type="protein sequence ID" value="ENSP00000279242.2"/>
    <property type="gene ID" value="ENSG00000149792.9"/>
</dbReference>
<dbReference type="Ensembl" id="ENST00000526319.5">
    <property type="protein sequence ID" value="ENSP00000434190.1"/>
    <property type="gene ID" value="ENSG00000149792.9"/>
</dbReference>
<dbReference type="GeneID" id="740"/>
<dbReference type="KEGG" id="hsa:740"/>
<dbReference type="MANE-Select" id="ENST00000279242.7">
    <property type="protein sequence ID" value="ENSP00000279242.2"/>
    <property type="RefSeq nucleotide sequence ID" value="NM_004927.4"/>
    <property type="RefSeq protein sequence ID" value="NP_004918.1"/>
</dbReference>
<dbReference type="UCSC" id="uc001oda.3">
    <property type="organism name" value="human"/>
</dbReference>
<dbReference type="AGR" id="HGNC:1176"/>
<dbReference type="CTD" id="740"/>
<dbReference type="DisGeNET" id="740"/>
<dbReference type="GeneCards" id="MRPL49"/>
<dbReference type="HGNC" id="HGNC:1176">
    <property type="gene designation" value="MRPL49"/>
</dbReference>
<dbReference type="HPA" id="ENSG00000149792">
    <property type="expression patterns" value="Low tissue specificity"/>
</dbReference>
<dbReference type="MIM" id="606866">
    <property type="type" value="gene"/>
</dbReference>
<dbReference type="neXtProt" id="NX_Q13405"/>
<dbReference type="OpenTargets" id="ENSG00000149792"/>
<dbReference type="PharmGKB" id="PA30981"/>
<dbReference type="VEuPathDB" id="HostDB:ENSG00000149792"/>
<dbReference type="eggNOG" id="KOG4034">
    <property type="taxonomic scope" value="Eukaryota"/>
</dbReference>
<dbReference type="GeneTree" id="ENSGT00390000017253"/>
<dbReference type="HOGENOM" id="CLU_085757_2_3_1"/>
<dbReference type="InParanoid" id="Q13405"/>
<dbReference type="OMA" id="NPPEWKY"/>
<dbReference type="OrthoDB" id="19439at2759"/>
<dbReference type="PAN-GO" id="Q13405">
    <property type="GO annotations" value="2 GO annotations based on evolutionary models"/>
</dbReference>
<dbReference type="PhylomeDB" id="Q13405"/>
<dbReference type="TreeFam" id="TF317750"/>
<dbReference type="PathwayCommons" id="Q13405"/>
<dbReference type="Reactome" id="R-HSA-5368286">
    <property type="pathway name" value="Mitochondrial translation initiation"/>
</dbReference>
<dbReference type="Reactome" id="R-HSA-5389840">
    <property type="pathway name" value="Mitochondrial translation elongation"/>
</dbReference>
<dbReference type="Reactome" id="R-HSA-5419276">
    <property type="pathway name" value="Mitochondrial translation termination"/>
</dbReference>
<dbReference type="SignaLink" id="Q13405"/>
<dbReference type="SIGNOR" id="Q13405"/>
<dbReference type="BioGRID-ORCS" id="740">
    <property type="hits" value="430 hits in 1162 CRISPR screens"/>
</dbReference>
<dbReference type="ChiTaRS" id="MRPL49">
    <property type="organism name" value="human"/>
</dbReference>
<dbReference type="EvolutionaryTrace" id="Q13405"/>
<dbReference type="GenomeRNAi" id="740"/>
<dbReference type="Pharos" id="Q13405">
    <property type="development level" value="Tbio"/>
</dbReference>
<dbReference type="PRO" id="PR:Q13405"/>
<dbReference type="Proteomes" id="UP000005640">
    <property type="component" value="Chromosome 11"/>
</dbReference>
<dbReference type="RNAct" id="Q13405">
    <property type="molecule type" value="protein"/>
</dbReference>
<dbReference type="Bgee" id="ENSG00000149792">
    <property type="expression patterns" value="Expressed in right adrenal gland cortex and 205 other cell types or tissues"/>
</dbReference>
<dbReference type="ExpressionAtlas" id="Q13405">
    <property type="expression patterns" value="baseline and differential"/>
</dbReference>
<dbReference type="GO" id="GO:0005743">
    <property type="term" value="C:mitochondrial inner membrane"/>
    <property type="evidence" value="ECO:0000304"/>
    <property type="project" value="Reactome"/>
</dbReference>
<dbReference type="GO" id="GO:0005762">
    <property type="term" value="C:mitochondrial large ribosomal subunit"/>
    <property type="evidence" value="ECO:0000314"/>
    <property type="project" value="UniProtKB"/>
</dbReference>
<dbReference type="GO" id="GO:0005761">
    <property type="term" value="C:mitochondrial ribosome"/>
    <property type="evidence" value="ECO:0000314"/>
    <property type="project" value="UniProtKB"/>
</dbReference>
<dbReference type="GO" id="GO:0005739">
    <property type="term" value="C:mitochondrion"/>
    <property type="evidence" value="ECO:0000314"/>
    <property type="project" value="UniProtKB"/>
</dbReference>
<dbReference type="GO" id="GO:0003735">
    <property type="term" value="F:structural constituent of ribosome"/>
    <property type="evidence" value="ECO:0000318"/>
    <property type="project" value="GO_Central"/>
</dbReference>
<dbReference type="GO" id="GO:0032543">
    <property type="term" value="P:mitochondrial translation"/>
    <property type="evidence" value="ECO:0000303"/>
    <property type="project" value="ComplexPortal"/>
</dbReference>
<dbReference type="FunFam" id="3.30.780.10:FF:000009">
    <property type="entry name" value="39S ribosomal protein L49, mitochondrial"/>
    <property type="match status" value="1"/>
</dbReference>
<dbReference type="Gene3D" id="3.30.780.10">
    <property type="entry name" value="SUI1-like domain"/>
    <property type="match status" value="1"/>
</dbReference>
<dbReference type="InterPro" id="IPR007740">
    <property type="entry name" value="Ribosomal_mL49"/>
</dbReference>
<dbReference type="PANTHER" id="PTHR13477:SF0">
    <property type="entry name" value="LARGE RIBOSOMAL SUBUNIT PROTEIN ML49"/>
    <property type="match status" value="1"/>
</dbReference>
<dbReference type="PANTHER" id="PTHR13477">
    <property type="entry name" value="MITOCHONDRIAL 39S RIBOSOMAL PROTEIN L49"/>
    <property type="match status" value="1"/>
</dbReference>
<dbReference type="Pfam" id="PF05046">
    <property type="entry name" value="Img2"/>
    <property type="match status" value="1"/>
</dbReference>
<organism>
    <name type="scientific">Homo sapiens</name>
    <name type="common">Human</name>
    <dbReference type="NCBI Taxonomy" id="9606"/>
    <lineage>
        <taxon>Eukaryota</taxon>
        <taxon>Metazoa</taxon>
        <taxon>Chordata</taxon>
        <taxon>Craniata</taxon>
        <taxon>Vertebrata</taxon>
        <taxon>Euteleostomi</taxon>
        <taxon>Mammalia</taxon>
        <taxon>Eutheria</taxon>
        <taxon>Euarchontoglires</taxon>
        <taxon>Primates</taxon>
        <taxon>Haplorrhini</taxon>
        <taxon>Catarrhini</taxon>
        <taxon>Hominidae</taxon>
        <taxon>Homo</taxon>
    </lineage>
</organism>
<feature type="chain" id="PRO_0000207664" description="Large ribosomal subunit protein mL49">
    <location>
        <begin position="1"/>
        <end position="166"/>
    </location>
</feature>
<feature type="region of interest" description="Disordered" evidence="2">
    <location>
        <begin position="56"/>
        <end position="78"/>
    </location>
</feature>
<feature type="sequence variant" id="VAR_021991" description="In dbSNP:rs17146691.">
    <original>T</original>
    <variation>A</variation>
    <location>
        <position position="9"/>
    </location>
</feature>
<feature type="strand" evidence="17">
    <location>
        <begin position="39"/>
        <end position="42"/>
    </location>
</feature>
<feature type="helix" evidence="17">
    <location>
        <begin position="46"/>
        <end position="49"/>
    </location>
</feature>
<feature type="strand" evidence="17">
    <location>
        <begin position="64"/>
        <end position="67"/>
    </location>
</feature>
<feature type="turn" evidence="16">
    <location>
        <begin position="69"/>
        <end position="71"/>
    </location>
</feature>
<feature type="strand" evidence="17">
    <location>
        <begin position="83"/>
        <end position="86"/>
    </location>
</feature>
<feature type="strand" evidence="17">
    <location>
        <begin position="96"/>
        <end position="101"/>
    </location>
</feature>
<feature type="turn" evidence="17">
    <location>
        <begin position="102"/>
        <end position="104"/>
    </location>
</feature>
<feature type="strand" evidence="17">
    <location>
        <begin position="105"/>
        <end position="110"/>
    </location>
</feature>
<feature type="strand" evidence="17">
    <location>
        <begin position="113"/>
        <end position="115"/>
    </location>
</feature>
<feature type="helix" evidence="17">
    <location>
        <begin position="117"/>
        <end position="132"/>
    </location>
</feature>
<feature type="strand" evidence="17">
    <location>
        <begin position="138"/>
        <end position="141"/>
    </location>
</feature>
<feature type="turn" evidence="17">
    <location>
        <begin position="142"/>
        <end position="145"/>
    </location>
</feature>
<feature type="strand" evidence="17">
    <location>
        <begin position="146"/>
        <end position="151"/>
    </location>
</feature>
<feature type="helix" evidence="17">
    <location>
        <begin position="154"/>
        <end position="164"/>
    </location>
</feature>
<gene>
    <name type="primary">MRPL49</name>
    <name type="synonym">C11orf4</name>
    <name type="synonym">NOF1</name>
    <name type="ORF">OK/SW-cl.67</name>
</gene>
<reference key="1">
    <citation type="journal article" date="1996" name="Genomics">
        <title>Isolation, cDNA, and genomic structure of a conserved gene (NOF) at chromosome 11q13 next to FAU and oriented in the opposite transcriptional orientation.</title>
        <authorList>
            <person name="Kas K."/>
            <person name="Lemahieu V."/>
            <person name="Meyen E."/>
            <person name="van de Ven W.J.M."/>
            <person name="Merregaert J."/>
        </authorList>
    </citation>
    <scope>NUCLEOTIDE SEQUENCE [MRNA]</scope>
    <source>
        <tissue>Skeletal muscle</tissue>
    </source>
</reference>
<reference key="2">
    <citation type="submission" date="2001-05" db="EMBL/GenBank/DDBJ databases">
        <title>Identification of immuno-peptidmics that are recognized by tumor-reactive CTL generated from TIL of colon cancer patients.</title>
        <authorList>
            <person name="Shichijo S."/>
            <person name="Itoh K."/>
        </authorList>
    </citation>
    <scope>NUCLEOTIDE SEQUENCE [LARGE SCALE MRNA]</scope>
    <source>
        <tissue>Colon adenocarcinoma</tissue>
    </source>
</reference>
<reference key="3">
    <citation type="journal article" date="2004" name="Nat. Genet.">
        <title>Complete sequencing and characterization of 21,243 full-length human cDNAs.</title>
        <authorList>
            <person name="Ota T."/>
            <person name="Suzuki Y."/>
            <person name="Nishikawa T."/>
            <person name="Otsuki T."/>
            <person name="Sugiyama T."/>
            <person name="Irie R."/>
            <person name="Wakamatsu A."/>
            <person name="Hayashi K."/>
            <person name="Sato H."/>
            <person name="Nagai K."/>
            <person name="Kimura K."/>
            <person name="Makita H."/>
            <person name="Sekine M."/>
            <person name="Obayashi M."/>
            <person name="Nishi T."/>
            <person name="Shibahara T."/>
            <person name="Tanaka T."/>
            <person name="Ishii S."/>
            <person name="Yamamoto J."/>
            <person name="Saito K."/>
            <person name="Kawai Y."/>
            <person name="Isono Y."/>
            <person name="Nakamura Y."/>
            <person name="Nagahari K."/>
            <person name="Murakami K."/>
            <person name="Yasuda T."/>
            <person name="Iwayanagi T."/>
            <person name="Wagatsuma M."/>
            <person name="Shiratori A."/>
            <person name="Sudo H."/>
            <person name="Hosoiri T."/>
            <person name="Kaku Y."/>
            <person name="Kodaira H."/>
            <person name="Kondo H."/>
            <person name="Sugawara M."/>
            <person name="Takahashi M."/>
            <person name="Kanda K."/>
            <person name="Yokoi T."/>
            <person name="Furuya T."/>
            <person name="Kikkawa E."/>
            <person name="Omura Y."/>
            <person name="Abe K."/>
            <person name="Kamihara K."/>
            <person name="Katsuta N."/>
            <person name="Sato K."/>
            <person name="Tanikawa M."/>
            <person name="Yamazaki M."/>
            <person name="Ninomiya K."/>
            <person name="Ishibashi T."/>
            <person name="Yamashita H."/>
            <person name="Murakawa K."/>
            <person name="Fujimori K."/>
            <person name="Tanai H."/>
            <person name="Kimata M."/>
            <person name="Watanabe M."/>
            <person name="Hiraoka S."/>
            <person name="Chiba Y."/>
            <person name="Ishida S."/>
            <person name="Ono Y."/>
            <person name="Takiguchi S."/>
            <person name="Watanabe S."/>
            <person name="Yosida M."/>
            <person name="Hotuta T."/>
            <person name="Kusano J."/>
            <person name="Kanehori K."/>
            <person name="Takahashi-Fujii A."/>
            <person name="Hara H."/>
            <person name="Tanase T.-O."/>
            <person name="Nomura Y."/>
            <person name="Togiya S."/>
            <person name="Komai F."/>
            <person name="Hara R."/>
            <person name="Takeuchi K."/>
            <person name="Arita M."/>
            <person name="Imose N."/>
            <person name="Musashino K."/>
            <person name="Yuuki H."/>
            <person name="Oshima A."/>
            <person name="Sasaki N."/>
            <person name="Aotsuka S."/>
            <person name="Yoshikawa Y."/>
            <person name="Matsunawa H."/>
            <person name="Ichihara T."/>
            <person name="Shiohata N."/>
            <person name="Sano S."/>
            <person name="Moriya S."/>
            <person name="Momiyama H."/>
            <person name="Satoh N."/>
            <person name="Takami S."/>
            <person name="Terashima Y."/>
            <person name="Suzuki O."/>
            <person name="Nakagawa S."/>
            <person name="Senoh A."/>
            <person name="Mizoguchi H."/>
            <person name="Goto Y."/>
            <person name="Shimizu F."/>
            <person name="Wakebe H."/>
            <person name="Hishigaki H."/>
            <person name="Watanabe T."/>
            <person name="Sugiyama A."/>
            <person name="Takemoto M."/>
            <person name="Kawakami B."/>
            <person name="Yamazaki M."/>
            <person name="Watanabe K."/>
            <person name="Kumagai A."/>
            <person name="Itakura S."/>
            <person name="Fukuzumi Y."/>
            <person name="Fujimori Y."/>
            <person name="Komiyama M."/>
            <person name="Tashiro H."/>
            <person name="Tanigami A."/>
            <person name="Fujiwara T."/>
            <person name="Ono T."/>
            <person name="Yamada K."/>
            <person name="Fujii Y."/>
            <person name="Ozaki K."/>
            <person name="Hirao M."/>
            <person name="Ohmori Y."/>
            <person name="Kawabata A."/>
            <person name="Hikiji T."/>
            <person name="Kobatake N."/>
            <person name="Inagaki H."/>
            <person name="Ikema Y."/>
            <person name="Okamoto S."/>
            <person name="Okitani R."/>
            <person name="Kawakami T."/>
            <person name="Noguchi S."/>
            <person name="Itoh T."/>
            <person name="Shigeta K."/>
            <person name="Senba T."/>
            <person name="Matsumura K."/>
            <person name="Nakajima Y."/>
            <person name="Mizuno T."/>
            <person name="Morinaga M."/>
            <person name="Sasaki M."/>
            <person name="Togashi T."/>
            <person name="Oyama M."/>
            <person name="Hata H."/>
            <person name="Watanabe M."/>
            <person name="Komatsu T."/>
            <person name="Mizushima-Sugano J."/>
            <person name="Satoh T."/>
            <person name="Shirai Y."/>
            <person name="Takahashi Y."/>
            <person name="Nakagawa K."/>
            <person name="Okumura K."/>
            <person name="Nagase T."/>
            <person name="Nomura N."/>
            <person name="Kikuchi H."/>
            <person name="Masuho Y."/>
            <person name="Yamashita R."/>
            <person name="Nakai K."/>
            <person name="Yada T."/>
            <person name="Nakamura Y."/>
            <person name="Ohara O."/>
            <person name="Isogai T."/>
            <person name="Sugano S."/>
        </authorList>
    </citation>
    <scope>NUCLEOTIDE SEQUENCE [LARGE SCALE MRNA]</scope>
    <source>
        <tissue>Kidney</tissue>
    </source>
</reference>
<reference key="4">
    <citation type="submission" date="2005-07" db="EMBL/GenBank/DDBJ databases">
        <authorList>
            <person name="Mural R.J."/>
            <person name="Istrail S."/>
            <person name="Sutton G.G."/>
            <person name="Florea L."/>
            <person name="Halpern A.L."/>
            <person name="Mobarry C.M."/>
            <person name="Lippert R."/>
            <person name="Walenz B."/>
            <person name="Shatkay H."/>
            <person name="Dew I."/>
            <person name="Miller J.R."/>
            <person name="Flanigan M.J."/>
            <person name="Edwards N.J."/>
            <person name="Bolanos R."/>
            <person name="Fasulo D."/>
            <person name="Halldorsson B.V."/>
            <person name="Hannenhalli S."/>
            <person name="Turner R."/>
            <person name="Yooseph S."/>
            <person name="Lu F."/>
            <person name="Nusskern D.R."/>
            <person name="Shue B.C."/>
            <person name="Zheng X.H."/>
            <person name="Zhong F."/>
            <person name="Delcher A.L."/>
            <person name="Huson D.H."/>
            <person name="Kravitz S.A."/>
            <person name="Mouchard L."/>
            <person name="Reinert K."/>
            <person name="Remington K.A."/>
            <person name="Clark A.G."/>
            <person name="Waterman M.S."/>
            <person name="Eichler E.E."/>
            <person name="Adams M.D."/>
            <person name="Hunkapiller M.W."/>
            <person name="Myers E.W."/>
            <person name="Venter J.C."/>
        </authorList>
    </citation>
    <scope>NUCLEOTIDE SEQUENCE [LARGE SCALE GENOMIC DNA]</scope>
</reference>
<reference key="5">
    <citation type="journal article" date="2004" name="Genome Res.">
        <title>The status, quality, and expansion of the NIH full-length cDNA project: the Mammalian Gene Collection (MGC).</title>
        <authorList>
            <consortium name="The MGC Project Team"/>
        </authorList>
    </citation>
    <scope>NUCLEOTIDE SEQUENCE [LARGE SCALE MRNA]</scope>
    <source>
        <tissue>Pancreas</tissue>
    </source>
</reference>
<reference key="6">
    <citation type="journal article" date="2001" name="J. Biol. Chem.">
        <title>The large subunit of the mammalian mitochondrial ribosome. Analysis of the complement of ribosomal proteins present.</title>
        <authorList>
            <person name="Koc E.C."/>
            <person name="Burkhart W."/>
            <person name="Blackburn K."/>
            <person name="Moyer M.B."/>
            <person name="Schlatzer D.M."/>
            <person name="Moseley A."/>
            <person name="Spremulli L.L."/>
        </authorList>
    </citation>
    <scope>IDENTIFICATION</scope>
    <scope>SUBUNIT</scope>
</reference>
<reference key="7">
    <citation type="journal article" date="2011" name="BMC Syst. Biol.">
        <title>Initial characterization of the human central proteome.</title>
        <authorList>
            <person name="Burkard T.R."/>
            <person name="Planyavsky M."/>
            <person name="Kaupe I."/>
            <person name="Breitwieser F.P."/>
            <person name="Buerckstuemmer T."/>
            <person name="Bennett K.L."/>
            <person name="Superti-Furga G."/>
            <person name="Colinge J."/>
        </authorList>
    </citation>
    <scope>IDENTIFICATION BY MASS SPECTROMETRY [LARGE SCALE ANALYSIS]</scope>
</reference>
<reference key="8">
    <citation type="journal article" date="2015" name="Proteomics">
        <title>N-terminome analysis of the human mitochondrial proteome.</title>
        <authorList>
            <person name="Vaca Jacome A.S."/>
            <person name="Rabilloud T."/>
            <person name="Schaeffer-Reiss C."/>
            <person name="Rompais M."/>
            <person name="Ayoub D."/>
            <person name="Lane L."/>
            <person name="Bairoch A."/>
            <person name="Van Dorsselaer A."/>
            <person name="Carapito C."/>
        </authorList>
    </citation>
    <scope>IDENTIFICATION BY MASS SPECTROMETRY [LARGE SCALE ANALYSIS]</scope>
</reference>
<reference evidence="10" key="9">
    <citation type="journal article" date="2014" name="Science">
        <title>Structure of the large ribosomal subunit from human mitochondria.</title>
        <authorList>
            <person name="Brown A."/>
            <person name="Amunts A."/>
            <person name="Bai X.C."/>
            <person name="Sugimoto Y."/>
            <person name="Edwards P.C."/>
            <person name="Murshudov G."/>
            <person name="Scheres S.H."/>
            <person name="Ramakrishnan V."/>
        </authorList>
    </citation>
    <scope>STRUCTURE BY ELECTRON MICROSCOPY (3.40 ANGSTROMS)</scope>
    <scope>SUBCELLULAR LOCATION</scope>
    <scope>SUBUNIT</scope>
</reference>
<reference evidence="11" key="10">
    <citation type="journal article" date="2015" name="Science">
        <title>Ribosome. The structure of the human mitochondrial ribosome.</title>
        <authorList>
            <person name="Amunts A."/>
            <person name="Brown A."/>
            <person name="Toots J."/>
            <person name="Scheres S.H."/>
            <person name="Ramakrishnan V."/>
        </authorList>
    </citation>
    <scope>STRUCTURE BY ELECTRON MICROSCOPY (3.50 ANGSTROMS)</scope>
    <scope>SUBCELLULAR LOCATION</scope>
    <scope>SUBUNIT</scope>
</reference>
<reference evidence="12 13" key="11">
    <citation type="journal article" date="2017" name="Nat. Struct. Mol. Biol.">
        <title>Structures of the human mitochondrial ribosome in native states of assembly.</title>
        <authorList>
            <person name="Brown A."/>
            <person name="Rathore S."/>
            <person name="Kimanius D."/>
            <person name="Aibara S."/>
            <person name="Bai X.C."/>
            <person name="Rorbach J."/>
            <person name="Amunts A."/>
            <person name="Ramakrishnan V."/>
        </authorList>
    </citation>
    <scope>STRUCTURE BY ELECTRON MICROSCOPY (3.03 ANGSTROMS)</scope>
    <scope>SUBCELLULAR LOCATION</scope>
    <scope>SUBUNIT</scope>
</reference>
<reference evidence="14 15" key="12">
    <citation type="journal article" date="2022" name="Nat. Commun.">
        <title>A late-stage assembly checkpoint of the human mitochondrial ribosome large subunit.</title>
        <authorList>
            <person name="Rebelo-Guiomar P."/>
            <person name="Pellegrino S."/>
            <person name="Dent K.C."/>
            <person name="Sas-Chen A."/>
            <person name="Miller-Fleming L."/>
            <person name="Garone C."/>
            <person name="Van Haute L."/>
            <person name="Rogan J.F."/>
            <person name="Dinan A."/>
            <person name="Firth A.E."/>
            <person name="Andrews B."/>
            <person name="Whitworth A.J."/>
            <person name="Schwartz S."/>
            <person name="Warren A.J."/>
            <person name="Minczuk M."/>
        </authorList>
    </citation>
    <scope>STRUCTURE BY ELECTRON MICROSCOPY (2.9 ANGSTROMS) IN COMPLEX WITH MTLSU</scope>
    <scope>SUBUNIT</scope>
</reference>